<reference key="1">
    <citation type="submission" date="2007-12" db="EMBL/GenBank/DDBJ databases">
        <title>Brucella suis ATCC 23445 whole genome shotgun sequencing project.</title>
        <authorList>
            <person name="Setubal J.C."/>
            <person name="Bowns C."/>
            <person name="Boyle S."/>
            <person name="Crasta O.R."/>
            <person name="Czar M.J."/>
            <person name="Dharmanolla C."/>
            <person name="Gillespie J.J."/>
            <person name="Kenyon R.W."/>
            <person name="Lu J."/>
            <person name="Mane S."/>
            <person name="Mohapatra S."/>
            <person name="Nagrani S."/>
            <person name="Purkayastha A."/>
            <person name="Rajasimha H.K."/>
            <person name="Shallom J.M."/>
            <person name="Shallom S."/>
            <person name="Shukla M."/>
            <person name="Snyder E.E."/>
            <person name="Sobral B.W."/>
            <person name="Wattam A.R."/>
            <person name="Will R."/>
            <person name="Williams K."/>
            <person name="Yoo H."/>
            <person name="Bruce D."/>
            <person name="Detter C."/>
            <person name="Munk C."/>
            <person name="Brettin T.S."/>
        </authorList>
    </citation>
    <scope>NUCLEOTIDE SEQUENCE [LARGE SCALE GENOMIC DNA]</scope>
    <source>
        <strain>ATCC 23445 / NCTC 10510</strain>
    </source>
</reference>
<feature type="chain" id="PRO_1000082979" description="UPF0262 protein BSUIS_A0274">
    <location>
        <begin position="1"/>
        <end position="160"/>
    </location>
</feature>
<gene>
    <name type="ordered locus">BSUIS_A0274</name>
</gene>
<proteinExistence type="inferred from homology"/>
<sequence length="160" mass="18189">MTADVPNARLVDVELDESIGRSTPDVEHERAVAIFDLIEENSFHPVGDQKGGPYRLKLSLMESRLIFSITRENGDAVATHILSLTPLRRVVRDYFMIYESYYQAIRSATPSKIEAIDMGRRGLHNEGSQTLQARLKGKIEVDFDTARRLFTLVCVLHWRG</sequence>
<comment type="similarity">
    <text evidence="1">Belongs to the UPF0262 family.</text>
</comment>
<dbReference type="EMBL" id="CP000911">
    <property type="protein sequence ID" value="ABY37370.1"/>
    <property type="molecule type" value="Genomic_DNA"/>
</dbReference>
<dbReference type="RefSeq" id="WP_006072082.1">
    <property type="nucleotide sequence ID" value="NC_010169.1"/>
</dbReference>
<dbReference type="KEGG" id="bmt:BSUIS_A0274"/>
<dbReference type="HOGENOM" id="CLU_112904_0_0_5"/>
<dbReference type="Proteomes" id="UP000008545">
    <property type="component" value="Chromosome I"/>
</dbReference>
<dbReference type="HAMAP" id="MF_00678">
    <property type="entry name" value="UPF0262"/>
    <property type="match status" value="1"/>
</dbReference>
<dbReference type="InterPro" id="IPR008321">
    <property type="entry name" value="UCP032146"/>
</dbReference>
<dbReference type="NCBIfam" id="NF002769">
    <property type="entry name" value="PRK02853.1"/>
    <property type="match status" value="1"/>
</dbReference>
<dbReference type="Pfam" id="PF06793">
    <property type="entry name" value="UPF0262"/>
    <property type="match status" value="1"/>
</dbReference>
<dbReference type="PIRSF" id="PIRSF032146">
    <property type="entry name" value="UCP032146"/>
    <property type="match status" value="1"/>
</dbReference>
<name>Y274_BRUSI</name>
<protein>
    <recommendedName>
        <fullName evidence="1">UPF0262 protein BSUIS_A0274</fullName>
    </recommendedName>
</protein>
<accession>B0CJM9</accession>
<evidence type="ECO:0000255" key="1">
    <source>
        <dbReference type="HAMAP-Rule" id="MF_00678"/>
    </source>
</evidence>
<organism>
    <name type="scientific">Brucella suis (strain ATCC 23445 / NCTC 10510)</name>
    <dbReference type="NCBI Taxonomy" id="470137"/>
    <lineage>
        <taxon>Bacteria</taxon>
        <taxon>Pseudomonadati</taxon>
        <taxon>Pseudomonadota</taxon>
        <taxon>Alphaproteobacteria</taxon>
        <taxon>Hyphomicrobiales</taxon>
        <taxon>Brucellaceae</taxon>
        <taxon>Brucella/Ochrobactrum group</taxon>
        <taxon>Brucella</taxon>
    </lineage>
</organism>